<dbReference type="EMBL" id="BA000019">
    <property type="protein sequence ID" value="BAB76088.1"/>
    <property type="molecule type" value="Genomic_DNA"/>
</dbReference>
<dbReference type="EMBL" id="L10036">
    <property type="protein sequence ID" value="AAD04186.2"/>
    <property type="molecule type" value="Genomic_DNA"/>
</dbReference>
<dbReference type="PIR" id="AE2354">
    <property type="entry name" value="AE2354"/>
</dbReference>
<dbReference type="RefSeq" id="WP_010998526.1">
    <property type="nucleotide sequence ID" value="NZ_RSCN01000051.1"/>
</dbReference>
<dbReference type="SMR" id="Q05067"/>
<dbReference type="STRING" id="103690.gene:10496438"/>
<dbReference type="KEGG" id="ana:all4389"/>
<dbReference type="eggNOG" id="COG1131">
    <property type="taxonomic scope" value="Bacteria"/>
</dbReference>
<dbReference type="OrthoDB" id="9804819at2"/>
<dbReference type="Proteomes" id="UP000002483">
    <property type="component" value="Chromosome"/>
</dbReference>
<dbReference type="GO" id="GO:0005524">
    <property type="term" value="F:ATP binding"/>
    <property type="evidence" value="ECO:0007669"/>
    <property type="project" value="UniProtKB-KW"/>
</dbReference>
<dbReference type="GO" id="GO:0016887">
    <property type="term" value="F:ATP hydrolysis activity"/>
    <property type="evidence" value="ECO:0007669"/>
    <property type="project" value="InterPro"/>
</dbReference>
<dbReference type="CDD" id="cd03230">
    <property type="entry name" value="ABC_DR_subfamily_A"/>
    <property type="match status" value="1"/>
</dbReference>
<dbReference type="Gene3D" id="3.40.50.300">
    <property type="entry name" value="P-loop containing nucleotide triphosphate hydrolases"/>
    <property type="match status" value="1"/>
</dbReference>
<dbReference type="InterPro" id="IPR003593">
    <property type="entry name" value="AAA+_ATPase"/>
</dbReference>
<dbReference type="InterPro" id="IPR003439">
    <property type="entry name" value="ABC_transporter-like_ATP-bd"/>
</dbReference>
<dbReference type="InterPro" id="IPR017871">
    <property type="entry name" value="ABC_transporter-like_CS"/>
</dbReference>
<dbReference type="InterPro" id="IPR051782">
    <property type="entry name" value="ABC_Transporter_VariousFunc"/>
</dbReference>
<dbReference type="InterPro" id="IPR027417">
    <property type="entry name" value="P-loop_NTPase"/>
</dbReference>
<dbReference type="PANTHER" id="PTHR42939">
    <property type="entry name" value="ABC TRANSPORTER ATP-BINDING PROTEIN ALBC-RELATED"/>
    <property type="match status" value="1"/>
</dbReference>
<dbReference type="PANTHER" id="PTHR42939:SF1">
    <property type="entry name" value="ABC TRANSPORTER ATP-BINDING PROTEIN ALBC-RELATED"/>
    <property type="match status" value="1"/>
</dbReference>
<dbReference type="Pfam" id="PF00005">
    <property type="entry name" value="ABC_tran"/>
    <property type="match status" value="1"/>
</dbReference>
<dbReference type="SMART" id="SM00382">
    <property type="entry name" value="AAA"/>
    <property type="match status" value="1"/>
</dbReference>
<dbReference type="SUPFAM" id="SSF52540">
    <property type="entry name" value="P-loop containing nucleoside triphosphate hydrolases"/>
    <property type="match status" value="1"/>
</dbReference>
<dbReference type="PROSITE" id="PS00211">
    <property type="entry name" value="ABC_TRANSPORTER_1"/>
    <property type="match status" value="1"/>
</dbReference>
<dbReference type="PROSITE" id="PS50893">
    <property type="entry name" value="ABC_TRANSPORTER_2"/>
    <property type="match status" value="1"/>
</dbReference>
<accession>Q05067</accession>
<protein>
    <recommendedName>
        <fullName>Uncharacterized ABC transporter ATP-binding protein all4389</fullName>
    </recommendedName>
</protein>
<evidence type="ECO:0000255" key="1">
    <source>
        <dbReference type="PROSITE-ProRule" id="PRU00434"/>
    </source>
</evidence>
<evidence type="ECO:0000305" key="2"/>
<keyword id="KW-0067">ATP-binding</keyword>
<keyword id="KW-0547">Nucleotide-binding</keyword>
<keyword id="KW-1185">Reference proteome</keyword>
<keyword id="KW-0813">Transport</keyword>
<feature type="chain" id="PRO_0000093286" description="Uncharacterized ABC transporter ATP-binding protein all4389">
    <location>
        <begin position="1"/>
        <end position="335"/>
    </location>
</feature>
<feature type="domain" description="ABC transporter" evidence="1">
    <location>
        <begin position="21"/>
        <end position="258"/>
    </location>
</feature>
<feature type="binding site" evidence="1">
    <location>
        <begin position="60"/>
        <end position="67"/>
    </location>
    <ligand>
        <name>ATP</name>
        <dbReference type="ChEBI" id="CHEBI:30616"/>
    </ligand>
</feature>
<proteinExistence type="inferred from homology"/>
<reference key="1">
    <citation type="journal article" date="2001" name="DNA Res.">
        <title>Complete genomic sequence of the filamentous nitrogen-fixing cyanobacterium Anabaena sp. strain PCC 7120.</title>
        <authorList>
            <person name="Kaneko T."/>
            <person name="Nakamura Y."/>
            <person name="Wolk C.P."/>
            <person name="Kuritz T."/>
            <person name="Sasamoto S."/>
            <person name="Watanabe A."/>
            <person name="Iriguchi M."/>
            <person name="Ishikawa A."/>
            <person name="Kawashima K."/>
            <person name="Kimura T."/>
            <person name="Kishida Y."/>
            <person name="Kohara M."/>
            <person name="Matsumoto M."/>
            <person name="Matsuno A."/>
            <person name="Muraki A."/>
            <person name="Nakazaki N."/>
            <person name="Shimpo S."/>
            <person name="Sugimoto M."/>
            <person name="Takazawa M."/>
            <person name="Yamada M."/>
            <person name="Yasuda M."/>
            <person name="Tabata S."/>
        </authorList>
    </citation>
    <scope>NUCLEOTIDE SEQUENCE [LARGE SCALE GENOMIC DNA]</scope>
    <source>
        <strain>PCC 7120 / SAG 25.82 / UTEX 2576</strain>
    </source>
</reference>
<reference key="2">
    <citation type="journal article" date="1993" name="J. Bacteriol.">
        <title>Anabaena sp. strain PCC 7120 bifA gene encoding a sequence-specific DNA-binding protein cloned by in vivo transcriptional interference selection.</title>
        <authorList>
            <person name="Wei T.-F."/>
            <person name="Ramasubramanian T.S."/>
            <person name="Pu F."/>
            <person name="Golden J.W."/>
        </authorList>
    </citation>
    <scope>NUCLEOTIDE SEQUENCE [GENOMIC DNA] OF 1-93</scope>
</reference>
<name>Y4389_NOSS1</name>
<comment type="similarity">
    <text evidence="2">Belongs to the ABC transporter superfamily.</text>
</comment>
<gene>
    <name type="ordered locus">all4389</name>
</gene>
<sequence>MQSFTDTPDFQLTTKNTPSVVMTSDLRKVYRTGFWMNQKVVSLKGCSLTVYQGETFGLLGPNGAGKTTLLKLLLGIIRPSGGKGLLLGQPLGDRHIKQRVGYLSENPYLYEYLTGWEFLELAAGLFEIPASVQRQRIPELLDLVGLSVADAQKKQMRRYSKGMLQRVGMAQALINDPELIFLDEPMSGLDPLGRYRMREIILSLKAAGKTIFFNSHILSEVEKICDRIAILSQGELVCSGSLDELLGSQNTYHVQGQNGDWEILKKWLANLVYEPDGYWQGTLQEDYYDFLASVRLMGGRIISMNLSRQSLEEFFINQIQKQDTSLHEVIDQSEV</sequence>
<organism>
    <name type="scientific">Nostoc sp. (strain PCC 7120 / SAG 25.82 / UTEX 2576)</name>
    <dbReference type="NCBI Taxonomy" id="103690"/>
    <lineage>
        <taxon>Bacteria</taxon>
        <taxon>Bacillati</taxon>
        <taxon>Cyanobacteriota</taxon>
        <taxon>Cyanophyceae</taxon>
        <taxon>Nostocales</taxon>
        <taxon>Nostocaceae</taxon>
        <taxon>Nostoc</taxon>
    </lineage>
</organism>